<reference key="1">
    <citation type="journal article" date="1992" name="J. Biol. Chem.">
        <title>The gene for stinging nettle lectin (Urtica dioica agglutinin) encodes both a lectin and a chitinase.</title>
        <authorList>
            <person name="Lerner D.R."/>
            <person name="Raikhel N.V."/>
        </authorList>
    </citation>
    <scope>NUCLEOTIDE SEQUENCE [MRNA]</scope>
</reference>
<reference key="2">
    <citation type="journal article" date="1992" name="J. Biol. Chem.">
        <authorList>
            <person name="Lerner D.R."/>
            <person name="Raikhel N.V."/>
        </authorList>
    </citation>
    <scope>ERRATUM OF PUBMED:1375935</scope>
</reference>
<reference key="3">
    <citation type="journal article" date="1999" name="Plant Mol. Biol.">
        <title>Characterization of Urtica dioica agglutinin isolectins and the encoding gene family.</title>
        <authorList>
            <person name="Does M.P."/>
            <person name="Ng D.K."/>
            <person name="Dekker H.L."/>
            <person name="Peumans W.J."/>
            <person name="Houterman P.M."/>
            <person name="Van Damme E.J."/>
            <person name="Cornelissen B.J."/>
        </authorList>
    </citation>
    <scope>NUCLEOTIDE SEQUENCE [GENOMIC DNA]</scope>
    <scope>MASS SPECTROMETRY</scope>
    <source>
        <strain>cv. Weerselo</strain>
    </source>
</reference>
<reference key="4">
    <citation type="journal article" date="1992" name="FEBS Lett.">
        <title>The primary structure of stinging nettle (Urtica dioica) agglutinin. A two-domain member of the hevein family.</title>
        <authorList>
            <person name="Beintema J.J."/>
            <person name="Peumans W.J."/>
        </authorList>
    </citation>
    <scope>PROTEIN SEQUENCE OF 24-112</scope>
    <scope>PYROGLUTAMATE FORMATION AT GLN-24</scope>
</reference>
<reference key="5">
    <citation type="journal article" date="1986" name="FEBS Lett.">
        <title>Extensive homologies between lectins from non-leguminous plants.</title>
        <authorList>
            <person name="Chapot M.-P."/>
            <person name="Peumans W.J."/>
            <person name="Strosberg A.D."/>
        </authorList>
    </citation>
    <scope>PRELIMINARY PROTEIN SEQUENCE OF 24-54</scope>
</reference>
<reference key="6">
    <citation type="journal article" date="2000" name="Structure">
        <title>Crystal structure of Urtica dioica agglutinin, a superantigen presented by MHC molecules of class I and class II.</title>
        <authorList>
            <person name="Saul F.A."/>
            <person name="Rovira P."/>
            <person name="Boulot G."/>
            <person name="van Damme E.J.M."/>
            <person name="Peumans W.J."/>
            <person name="Truffa-Bachi P."/>
            <person name="Bentley G.A."/>
        </authorList>
    </citation>
    <scope>X-RAY CRYSTALLOGRAPHY (1.4 ANGSTROMS) OF 24-112 IN COMPLEX WITH TRI-ACETYLCHITOTRIOSE AND TETRA-ACETYLCHITOTETRAOSE</scope>
    <scope>FUNCTION</scope>
    <scope>INTERACTION WITH HUMAN TCR AND MHC</scope>
    <scope>DISULFIDE BONDS</scope>
</reference>
<reference key="7">
    <citation type="journal article" date="2001" name="Acta Crystallogr. D">
        <title>Structure of Urtica dioica agglutinin isolectin I: dimer formation mediated by two zinc ions bound at the sugar-binding site.</title>
        <authorList>
            <person name="Harata K."/>
            <person name="Schubert W.-D."/>
            <person name="Muraki M."/>
        </authorList>
    </citation>
    <scope>X-RAY CRYSTALLOGRAPHY (1.9 ANGSTROMS) OF 24-112</scope>
    <scope>SUBUNIT</scope>
    <scope>ZINC BINDING</scope>
    <scope>DISULFIDE BONDS</scope>
</reference>
<keyword id="KW-0002">3D-structure</keyword>
<keyword id="KW-0929">Antimicrobial</keyword>
<keyword id="KW-0119">Carbohydrate metabolism</keyword>
<keyword id="KW-0146">Chitin degradation</keyword>
<keyword id="KW-0147">Chitin-binding</keyword>
<keyword id="KW-0903">Direct protein sequencing</keyword>
<keyword id="KW-1015">Disulfide bond</keyword>
<keyword id="KW-0295">Fungicide</keyword>
<keyword id="KW-0325">Glycoprotein</keyword>
<keyword id="KW-0326">Glycosidase</keyword>
<keyword id="KW-0378">Hydrolase</keyword>
<keyword id="KW-0430">Lectin</keyword>
<keyword id="KW-0479">Metal-binding</keyword>
<keyword id="KW-0611">Plant defense</keyword>
<keyword id="KW-0624">Polysaccharide degradation</keyword>
<keyword id="KW-0873">Pyrrolidone carboxylic acid</keyword>
<keyword id="KW-0677">Repeat</keyword>
<keyword id="KW-0732">Signal</keyword>
<keyword id="KW-0862">Zinc</keyword>
<proteinExistence type="evidence at protein level"/>
<accession>P11218</accession>
<accession>Q9SYR1</accession>
<feature type="signal peptide" evidence="6">
    <location>
        <begin position="1"/>
        <end position="23"/>
    </location>
</feature>
<feature type="chain" id="PRO_0000005266" description="Lectin/endochitinase 1">
    <location>
        <begin position="24"/>
        <end position="372"/>
    </location>
</feature>
<feature type="chain" id="PRO_0000005267" description="Lectin 1">
    <location>
        <begin position="24"/>
        <end position="112"/>
    </location>
</feature>
<feature type="domain" description="Chitin-binding type-1 1" evidence="2">
    <location>
        <begin position="24"/>
        <end position="64"/>
    </location>
</feature>
<feature type="domain" description="Chitin-binding type-1 2" evidence="2">
    <location>
        <begin position="69"/>
        <end position="111"/>
    </location>
</feature>
<feature type="region of interest" description="Spacer">
    <location>
        <begin position="113"/>
        <end position="128"/>
    </location>
</feature>
<feature type="region of interest" description="Chitinase">
    <location>
        <begin position="129"/>
        <end position="372"/>
    </location>
</feature>
<feature type="binding site">
    <location>
        <position position="24"/>
    </location>
    <ligand>
        <name>substrate</name>
    </ligand>
</feature>
<feature type="binding site">
    <location>
        <begin position="42"/>
        <end position="53"/>
    </location>
    <ligand>
        <name>substrate</name>
    </ligand>
</feature>
<feature type="binding site">
    <location>
        <position position="70"/>
    </location>
    <ligand>
        <name>Zn(2+)</name>
        <dbReference type="ChEBI" id="CHEBI:29105"/>
        <label>1</label>
        <note>ligand shared between dimeric partners</note>
    </ligand>
</feature>
<feature type="binding site">
    <location>
        <position position="90"/>
    </location>
    <ligand>
        <name>Zn(2+)</name>
        <dbReference type="ChEBI" id="CHEBI:29105"/>
        <label>2</label>
        <note>ligand shared between dimeric partners</note>
    </ligand>
</feature>
<feature type="modified residue" description="Pyrrolidone carboxylic acid" evidence="6">
    <location>
        <position position="24"/>
    </location>
</feature>
<feature type="glycosylation site" description="N-linked (GlcNAc...) asparagine" evidence="1">
    <location>
        <position position="123"/>
    </location>
</feature>
<feature type="disulfide bond">
    <location>
        <begin position="26"/>
        <end position="41"/>
    </location>
</feature>
<feature type="disulfide bond">
    <location>
        <begin position="35"/>
        <end position="47"/>
    </location>
</feature>
<feature type="disulfide bond">
    <location>
        <begin position="40"/>
        <end position="54"/>
    </location>
</feature>
<feature type="disulfide bond">
    <location>
        <begin position="58"/>
        <end position="62"/>
    </location>
</feature>
<feature type="disulfide bond">
    <location>
        <begin position="72"/>
        <end position="87"/>
    </location>
</feature>
<feature type="disulfide bond">
    <location>
        <begin position="81"/>
        <end position="93"/>
    </location>
</feature>
<feature type="disulfide bond">
    <location>
        <begin position="86"/>
        <end position="100"/>
    </location>
</feature>
<feature type="disulfide bond">
    <location>
        <begin position="105"/>
        <end position="109"/>
    </location>
</feature>
<feature type="sequence conflict" description="In Ref. 3; AAD03614." evidence="7" ref="3">
    <original>S</original>
    <variation>A</variation>
    <location>
        <position position="7"/>
    </location>
</feature>
<feature type="helix" evidence="8">
    <location>
        <begin position="27"/>
        <end position="30"/>
    </location>
</feature>
<feature type="helix" evidence="8">
    <location>
        <begin position="36"/>
        <end position="38"/>
    </location>
</feature>
<feature type="strand" evidence="8">
    <location>
        <begin position="40"/>
        <end position="42"/>
    </location>
</feature>
<feature type="strand" evidence="8">
    <location>
        <begin position="45"/>
        <end position="50"/>
    </location>
</feature>
<feature type="helix" evidence="8">
    <location>
        <begin position="51"/>
        <end position="54"/>
    </location>
</feature>
<feature type="strand" evidence="8">
    <location>
        <begin position="58"/>
        <end position="61"/>
    </location>
</feature>
<feature type="helix" evidence="8">
    <location>
        <begin position="63"/>
        <end position="65"/>
    </location>
</feature>
<feature type="helix" evidence="8">
    <location>
        <begin position="74"/>
        <end position="76"/>
    </location>
</feature>
<feature type="strand" evidence="8">
    <location>
        <begin position="85"/>
        <end position="88"/>
    </location>
</feature>
<feature type="strand" evidence="8">
    <location>
        <begin position="91"/>
        <end position="96"/>
    </location>
</feature>
<feature type="helix" evidence="8">
    <location>
        <begin position="97"/>
        <end position="100"/>
    </location>
</feature>
<feature type="helix" evidence="8">
    <location>
        <begin position="102"/>
        <end position="104"/>
    </location>
</feature>
<feature type="strand" evidence="8">
    <location>
        <begin position="105"/>
        <end position="108"/>
    </location>
</feature>
<gene>
    <name type="primary">UDA1</name>
</gene>
<dbReference type="EC" id="3.2.1.14"/>
<dbReference type="EMBL" id="M87302">
    <property type="protein sequence ID" value="AAA34219.1"/>
    <property type="molecule type" value="mRNA"/>
</dbReference>
<dbReference type="EMBL" id="AF059535">
    <property type="protein sequence ID" value="AAD03614.1"/>
    <property type="molecule type" value="Genomic_DNA"/>
</dbReference>
<dbReference type="PIR" id="A44298">
    <property type="entry name" value="A42778"/>
</dbReference>
<dbReference type="PDB" id="1EN2">
    <property type="method" value="X-ray"/>
    <property type="resolution" value="1.40 A"/>
    <property type="chains" value="A=25-112"/>
</dbReference>
<dbReference type="PDB" id="1ENM">
    <property type="method" value="X-ray"/>
    <property type="resolution" value="1.90 A"/>
    <property type="chains" value="A=25-112"/>
</dbReference>
<dbReference type="PDB" id="1IQB">
    <property type="method" value="X-ray"/>
    <property type="resolution" value="1.90 A"/>
    <property type="chains" value="A/B=24-112"/>
</dbReference>
<dbReference type="PDBsum" id="1EN2"/>
<dbReference type="PDBsum" id="1ENM"/>
<dbReference type="PDBsum" id="1IQB"/>
<dbReference type="SMR" id="P11218"/>
<dbReference type="IntAct" id="P11218">
    <property type="interactions" value="1"/>
</dbReference>
<dbReference type="MINT" id="P11218"/>
<dbReference type="CAZy" id="CBM18">
    <property type="family name" value="Carbohydrate-Binding Module Family 18"/>
</dbReference>
<dbReference type="CAZy" id="GH19">
    <property type="family name" value="Glycoside Hydrolase Family 19"/>
</dbReference>
<dbReference type="UniLectin" id="P11218"/>
<dbReference type="GlyCosmos" id="P11218">
    <property type="glycosylation" value="1 site, No reported glycans"/>
</dbReference>
<dbReference type="EvolutionaryTrace" id="P11218"/>
<dbReference type="GO" id="GO:0030246">
    <property type="term" value="F:carbohydrate binding"/>
    <property type="evidence" value="ECO:0007669"/>
    <property type="project" value="UniProtKB-KW"/>
</dbReference>
<dbReference type="GO" id="GO:0008061">
    <property type="term" value="F:chitin binding"/>
    <property type="evidence" value="ECO:0007669"/>
    <property type="project" value="UniProtKB-KW"/>
</dbReference>
<dbReference type="GO" id="GO:0008843">
    <property type="term" value="F:endochitinase activity"/>
    <property type="evidence" value="ECO:0007669"/>
    <property type="project" value="UniProtKB-EC"/>
</dbReference>
<dbReference type="GO" id="GO:0046872">
    <property type="term" value="F:metal ion binding"/>
    <property type="evidence" value="ECO:0007669"/>
    <property type="project" value="UniProtKB-KW"/>
</dbReference>
<dbReference type="GO" id="GO:0016998">
    <property type="term" value="P:cell wall macromolecule catabolic process"/>
    <property type="evidence" value="ECO:0007669"/>
    <property type="project" value="InterPro"/>
</dbReference>
<dbReference type="GO" id="GO:0006032">
    <property type="term" value="P:chitin catabolic process"/>
    <property type="evidence" value="ECO:0007669"/>
    <property type="project" value="UniProtKB-KW"/>
</dbReference>
<dbReference type="GO" id="GO:0050832">
    <property type="term" value="P:defense response to fungus"/>
    <property type="evidence" value="ECO:0007669"/>
    <property type="project" value="UniProtKB-KW"/>
</dbReference>
<dbReference type="GO" id="GO:0031640">
    <property type="term" value="P:killing of cells of another organism"/>
    <property type="evidence" value="ECO:0007669"/>
    <property type="project" value="UniProtKB-KW"/>
</dbReference>
<dbReference type="GO" id="GO:0000272">
    <property type="term" value="P:polysaccharide catabolic process"/>
    <property type="evidence" value="ECO:0007669"/>
    <property type="project" value="UniProtKB-KW"/>
</dbReference>
<dbReference type="CDD" id="cd00325">
    <property type="entry name" value="chitinase_GH19"/>
    <property type="match status" value="1"/>
</dbReference>
<dbReference type="CDD" id="cd00035">
    <property type="entry name" value="ChtBD1"/>
    <property type="match status" value="2"/>
</dbReference>
<dbReference type="FunFam" id="3.30.20.10:FF:000001">
    <property type="entry name" value="Endochitinase (Chitinase)"/>
    <property type="match status" value="1"/>
</dbReference>
<dbReference type="Gene3D" id="1.10.530.10">
    <property type="match status" value="1"/>
</dbReference>
<dbReference type="Gene3D" id="3.30.20.10">
    <property type="entry name" value="Endochitinase, domain 2"/>
    <property type="match status" value="1"/>
</dbReference>
<dbReference type="Gene3D" id="3.30.60.10">
    <property type="entry name" value="Endochitinase-like"/>
    <property type="match status" value="2"/>
</dbReference>
<dbReference type="InterPro" id="IPR001002">
    <property type="entry name" value="Chitin-bd_1"/>
</dbReference>
<dbReference type="InterPro" id="IPR018371">
    <property type="entry name" value="Chitin-binding_1_CS"/>
</dbReference>
<dbReference type="InterPro" id="IPR036861">
    <property type="entry name" value="Endochitinase-like_sf"/>
</dbReference>
<dbReference type="InterPro" id="IPR016283">
    <property type="entry name" value="Glyco_hydro_19"/>
</dbReference>
<dbReference type="InterPro" id="IPR000726">
    <property type="entry name" value="Glyco_hydro_19_cat"/>
</dbReference>
<dbReference type="InterPro" id="IPR023346">
    <property type="entry name" value="Lysozyme-like_dom_sf"/>
</dbReference>
<dbReference type="PANTHER" id="PTHR22595:SF79">
    <property type="entry name" value="CHITINASE 12"/>
    <property type="match status" value="1"/>
</dbReference>
<dbReference type="PANTHER" id="PTHR22595">
    <property type="entry name" value="CHITINASE-RELATED"/>
    <property type="match status" value="1"/>
</dbReference>
<dbReference type="Pfam" id="PF00187">
    <property type="entry name" value="Chitin_bind_1"/>
    <property type="match status" value="1"/>
</dbReference>
<dbReference type="Pfam" id="PF00182">
    <property type="entry name" value="Glyco_hydro_19"/>
    <property type="match status" value="1"/>
</dbReference>
<dbReference type="PIRSF" id="PIRSF001060">
    <property type="entry name" value="Endochitinase"/>
    <property type="match status" value="1"/>
</dbReference>
<dbReference type="SMART" id="SM00270">
    <property type="entry name" value="ChtBD1"/>
    <property type="match status" value="2"/>
</dbReference>
<dbReference type="SUPFAM" id="SSF53955">
    <property type="entry name" value="Lysozyme-like"/>
    <property type="match status" value="1"/>
</dbReference>
<dbReference type="SUPFAM" id="SSF57016">
    <property type="entry name" value="Plant lectins/antimicrobial peptides"/>
    <property type="match status" value="2"/>
</dbReference>
<dbReference type="PROSITE" id="PS00026">
    <property type="entry name" value="CHIT_BIND_I_1"/>
    <property type="match status" value="2"/>
</dbReference>
<dbReference type="PROSITE" id="PS50941">
    <property type="entry name" value="CHIT_BIND_I_2"/>
    <property type="match status" value="2"/>
</dbReference>
<dbReference type="PROSITE" id="PS00773">
    <property type="entry name" value="CHITINASE_19_1"/>
    <property type="match status" value="1"/>
</dbReference>
<dbReference type="PROSITE" id="PS00774">
    <property type="entry name" value="CHITINASE_19_2"/>
    <property type="match status" value="1"/>
</dbReference>
<sequence length="372" mass="40542">MMMRFLSAVVIMSSAMAVGLVSAQRCGSQGGGGTCPALWCCSIWGWCGDSEPYCGRTCENKCWSGERSDHRCGAAVGNPPCGQDRCCSVHGWCGGGNDYCSGSKCQYRCSSSVRGPRVALSGNSTANSIGNVVVTEPLFDQMFSHRKDCPSQGFYSYHSFLVAAESFPAFGTIGDVATRKREVAAFLAHISQATSGERSDVENPHAWGLCHINTTTVTENDFCTSSDWPCAAGKKYSPRGPIQLTHNFNYGLAGQAIGEDLIQNPDLVEKDPIISFKTALWFWMSQHDNKPSCHDIVLNANSAANRIPNKGVIGNIISRAFGHDDFAVRSSSIGFYKRYCDMLGVSYGHDLKYWFDNTPSSEFQRIQMRVAA</sequence>
<organism>
    <name type="scientific">Urtica dioica</name>
    <name type="common">Great nettle</name>
    <name type="synonym">Stinging nettle</name>
    <dbReference type="NCBI Taxonomy" id="3501"/>
    <lineage>
        <taxon>Eukaryota</taxon>
        <taxon>Viridiplantae</taxon>
        <taxon>Streptophyta</taxon>
        <taxon>Embryophyta</taxon>
        <taxon>Tracheophyta</taxon>
        <taxon>Spermatophyta</taxon>
        <taxon>Magnoliopsida</taxon>
        <taxon>eudicotyledons</taxon>
        <taxon>Gunneridae</taxon>
        <taxon>Pentapetalae</taxon>
        <taxon>rosids</taxon>
        <taxon>fabids</taxon>
        <taxon>Rosales</taxon>
        <taxon>Urticaceae</taxon>
        <taxon>Urtica</taxon>
    </lineage>
</organism>
<protein>
    <recommendedName>
        <fullName>Lectin/endochitinase 1</fullName>
        <ecNumber>3.2.1.14</ecNumber>
    </recommendedName>
    <alternativeName>
        <fullName>Agglutinin</fullName>
    </alternativeName>
    <alternativeName>
        <fullName>UDA</fullName>
    </alternativeName>
    <alternativeName>
        <fullName>chia5.1.1</fullName>
    </alternativeName>
    <component>
        <recommendedName>
            <fullName>Lectin 1</fullName>
        </recommendedName>
    </component>
</protein>
<comment type="function">
    <text evidence="4">Functions both as a chitinase and as a N-acetyl-D-glucosamine binding lectin. Inhibits the growth of several phytopathogenic chitin-containing fungi. Also possesses insecticidal activity and superantigenic properties.</text>
</comment>
<comment type="catalytic activity">
    <reaction>
        <text>Random endo-hydrolysis of N-acetyl-beta-D-glucosaminide (1-&gt;4)-beta-linkages in chitin and chitodextrins.</text>
        <dbReference type="EC" id="3.2.1.14"/>
    </reaction>
</comment>
<comment type="subunit">
    <text evidence="4 5">Monomer and homodimer. Zinc favors dimerization. Active in the monomeric form but probably inactive in the dimeric form. The interaction with glycans on the mammalian TCR and MHC molecules of the T-cell and antigen-presenting cell, respectively, is inhibited by oligomers of GlcNAc.</text>
</comment>
<comment type="interaction">
    <interactant intactId="EBI-8453649">
        <id>P11218</id>
    </interactant>
    <interactant intactId="EBI-8453491">
        <id>Q75760</id>
        <label>env</label>
    </interactant>
    <organismsDiffer>true</organismsDiffer>
    <experiments>2</experiments>
</comment>
<comment type="tissue specificity">
    <text>Rhizomes and inflorescence with immature seeds.</text>
</comment>
<comment type="PTM">
    <text>Proteolytically processed to yield a very small protein (8.5 kDa, 86 AA) containing only the two chitin-binding domains.</text>
</comment>
<comment type="mass spectrometry" mass="9380.0" method="MALDI" evidence="3">
    <molecule>Lectin/endochitinase 1</molecule>
</comment>
<comment type="mass spectrometry" mass="9380.7" error="0.4" method="Electrospray" evidence="3">
    <molecule>Lectin/endochitinase 1</molecule>
</comment>
<name>AGI_URTDI</name>
<evidence type="ECO:0000255" key="1"/>
<evidence type="ECO:0000255" key="2">
    <source>
        <dbReference type="PROSITE-ProRule" id="PRU00261"/>
    </source>
</evidence>
<evidence type="ECO:0000269" key="3">
    <source>
    </source>
</evidence>
<evidence type="ECO:0000269" key="4">
    <source>
    </source>
</evidence>
<evidence type="ECO:0000269" key="5">
    <source>
    </source>
</evidence>
<evidence type="ECO:0000269" key="6">
    <source>
    </source>
</evidence>
<evidence type="ECO:0000305" key="7"/>
<evidence type="ECO:0007829" key="8">
    <source>
        <dbReference type="PDB" id="1IQB"/>
    </source>
</evidence>